<comment type="function">
    <text evidence="1">Forms part of the ribosomal stalk which helps the ribosome interact with GTP-bound translation factors.</text>
</comment>
<comment type="subunit">
    <text evidence="1">Part of the ribosomal stalk of the 50S ribosomal subunit. Interacts with L10 and the large rRNA to form the base of the stalk. L10 forms an elongated spine to which L12 dimers bind in a sequential fashion forming a multimeric L10(L12)X complex.</text>
</comment>
<comment type="PTM">
    <text evidence="1">One or more lysine residues are methylated.</text>
</comment>
<comment type="similarity">
    <text evidence="1">Belongs to the universal ribosomal protein uL11 family.</text>
</comment>
<reference key="1">
    <citation type="journal article" date="2011" name="J. Bacteriol.">
        <title>Complete genome sequence and updated annotation of Desulfovibrio alaskensis G20.</title>
        <authorList>
            <person name="Hauser L.J."/>
            <person name="Land M.L."/>
            <person name="Brown S.D."/>
            <person name="Larimer F."/>
            <person name="Keller K.L."/>
            <person name="Rapp-Giles B.J."/>
            <person name="Price M.N."/>
            <person name="Lin M."/>
            <person name="Bruce D.C."/>
            <person name="Detter J.C."/>
            <person name="Tapia R."/>
            <person name="Han C.S."/>
            <person name="Goodwin L.A."/>
            <person name="Cheng J.F."/>
            <person name="Pitluck S."/>
            <person name="Copeland A."/>
            <person name="Lucas S."/>
            <person name="Nolan M."/>
            <person name="Lapidus A.L."/>
            <person name="Palumbo A.V."/>
            <person name="Wall J.D."/>
        </authorList>
    </citation>
    <scope>NUCLEOTIDE SEQUENCE [LARGE SCALE GENOMIC DNA]</scope>
    <source>
        <strain>ATCC BAA-1058 / DSM 17464 / G20</strain>
    </source>
</reference>
<dbReference type="EMBL" id="CP000112">
    <property type="protein sequence ID" value="ABB39786.1"/>
    <property type="molecule type" value="Genomic_DNA"/>
</dbReference>
<dbReference type="RefSeq" id="WP_011368760.1">
    <property type="nucleotide sequence ID" value="NC_007519.1"/>
</dbReference>
<dbReference type="SMR" id="Q30X10"/>
<dbReference type="STRING" id="207559.Dde_2992"/>
<dbReference type="KEGG" id="dde:Dde_2992"/>
<dbReference type="eggNOG" id="COG0080">
    <property type="taxonomic scope" value="Bacteria"/>
</dbReference>
<dbReference type="HOGENOM" id="CLU_074237_2_1_7"/>
<dbReference type="Proteomes" id="UP000002710">
    <property type="component" value="Chromosome"/>
</dbReference>
<dbReference type="GO" id="GO:0022625">
    <property type="term" value="C:cytosolic large ribosomal subunit"/>
    <property type="evidence" value="ECO:0007669"/>
    <property type="project" value="TreeGrafter"/>
</dbReference>
<dbReference type="GO" id="GO:0070180">
    <property type="term" value="F:large ribosomal subunit rRNA binding"/>
    <property type="evidence" value="ECO:0007669"/>
    <property type="project" value="UniProtKB-UniRule"/>
</dbReference>
<dbReference type="GO" id="GO:0003735">
    <property type="term" value="F:structural constituent of ribosome"/>
    <property type="evidence" value="ECO:0007669"/>
    <property type="project" value="InterPro"/>
</dbReference>
<dbReference type="GO" id="GO:0006412">
    <property type="term" value="P:translation"/>
    <property type="evidence" value="ECO:0007669"/>
    <property type="project" value="UniProtKB-UniRule"/>
</dbReference>
<dbReference type="CDD" id="cd00349">
    <property type="entry name" value="Ribosomal_L11"/>
    <property type="match status" value="1"/>
</dbReference>
<dbReference type="FunFam" id="1.10.10.250:FF:000001">
    <property type="entry name" value="50S ribosomal protein L11"/>
    <property type="match status" value="1"/>
</dbReference>
<dbReference type="FunFam" id="3.30.1550.10:FF:000001">
    <property type="entry name" value="50S ribosomal protein L11"/>
    <property type="match status" value="1"/>
</dbReference>
<dbReference type="Gene3D" id="1.10.10.250">
    <property type="entry name" value="Ribosomal protein L11, C-terminal domain"/>
    <property type="match status" value="1"/>
</dbReference>
<dbReference type="Gene3D" id="3.30.1550.10">
    <property type="entry name" value="Ribosomal protein L11/L12, N-terminal domain"/>
    <property type="match status" value="1"/>
</dbReference>
<dbReference type="HAMAP" id="MF_00736">
    <property type="entry name" value="Ribosomal_uL11"/>
    <property type="match status" value="1"/>
</dbReference>
<dbReference type="InterPro" id="IPR000911">
    <property type="entry name" value="Ribosomal_uL11"/>
</dbReference>
<dbReference type="InterPro" id="IPR006519">
    <property type="entry name" value="Ribosomal_uL11_bac-typ"/>
</dbReference>
<dbReference type="InterPro" id="IPR020783">
    <property type="entry name" value="Ribosomal_uL11_C"/>
</dbReference>
<dbReference type="InterPro" id="IPR036769">
    <property type="entry name" value="Ribosomal_uL11_C_sf"/>
</dbReference>
<dbReference type="InterPro" id="IPR020784">
    <property type="entry name" value="Ribosomal_uL11_N"/>
</dbReference>
<dbReference type="InterPro" id="IPR036796">
    <property type="entry name" value="Ribosomal_uL11_N_sf"/>
</dbReference>
<dbReference type="NCBIfam" id="TIGR01632">
    <property type="entry name" value="L11_bact"/>
    <property type="match status" value="1"/>
</dbReference>
<dbReference type="PANTHER" id="PTHR11661">
    <property type="entry name" value="60S RIBOSOMAL PROTEIN L12"/>
    <property type="match status" value="1"/>
</dbReference>
<dbReference type="PANTHER" id="PTHR11661:SF1">
    <property type="entry name" value="LARGE RIBOSOMAL SUBUNIT PROTEIN UL11M"/>
    <property type="match status" value="1"/>
</dbReference>
<dbReference type="Pfam" id="PF00298">
    <property type="entry name" value="Ribosomal_L11"/>
    <property type="match status" value="1"/>
</dbReference>
<dbReference type="Pfam" id="PF03946">
    <property type="entry name" value="Ribosomal_L11_N"/>
    <property type="match status" value="1"/>
</dbReference>
<dbReference type="SMART" id="SM00649">
    <property type="entry name" value="RL11"/>
    <property type="match status" value="1"/>
</dbReference>
<dbReference type="SUPFAM" id="SSF54747">
    <property type="entry name" value="Ribosomal L11/L12e N-terminal domain"/>
    <property type="match status" value="1"/>
</dbReference>
<dbReference type="SUPFAM" id="SSF46906">
    <property type="entry name" value="Ribosomal protein L11, C-terminal domain"/>
    <property type="match status" value="1"/>
</dbReference>
<evidence type="ECO:0000255" key="1">
    <source>
        <dbReference type="HAMAP-Rule" id="MF_00736"/>
    </source>
</evidence>
<evidence type="ECO:0000305" key="2"/>
<organism>
    <name type="scientific">Oleidesulfovibrio alaskensis (strain ATCC BAA-1058 / DSM 17464 / G20)</name>
    <name type="common">Desulfovibrio alaskensis</name>
    <dbReference type="NCBI Taxonomy" id="207559"/>
    <lineage>
        <taxon>Bacteria</taxon>
        <taxon>Pseudomonadati</taxon>
        <taxon>Thermodesulfobacteriota</taxon>
        <taxon>Desulfovibrionia</taxon>
        <taxon>Desulfovibrionales</taxon>
        <taxon>Desulfovibrionaceae</taxon>
        <taxon>Oleidesulfovibrio</taxon>
    </lineage>
</organism>
<sequence>MAKKEIAKIKLQIQAGAANPSPPVGPALGQHGLNIMEFCKAFNARTQDQKGMVIPVVITAYADRSFTFITKTPPASVLLAKAAKVAKGSGEPNKTKVGSVTMEQVEEIAKLKMPDLSAKDLPGAVKTIAGTARSMGIDVK</sequence>
<gene>
    <name evidence="1" type="primary">rplK</name>
    <name type="ordered locus">Dde_2992</name>
</gene>
<keyword id="KW-0488">Methylation</keyword>
<keyword id="KW-1185">Reference proteome</keyword>
<keyword id="KW-0687">Ribonucleoprotein</keyword>
<keyword id="KW-0689">Ribosomal protein</keyword>
<keyword id="KW-0694">RNA-binding</keyword>
<keyword id="KW-0699">rRNA-binding</keyword>
<name>RL11_OLEA2</name>
<proteinExistence type="inferred from homology"/>
<accession>Q30X10</accession>
<protein>
    <recommendedName>
        <fullName evidence="1">Large ribosomal subunit protein uL11</fullName>
    </recommendedName>
    <alternativeName>
        <fullName evidence="2">50S ribosomal protein L11</fullName>
    </alternativeName>
</protein>
<feature type="chain" id="PRO_0000258151" description="Large ribosomal subunit protein uL11">
    <location>
        <begin position="1"/>
        <end position="140"/>
    </location>
</feature>